<organism>
    <name type="scientific">Geobacter metallireducens (strain ATCC 53774 / DSM 7210 / GS-15)</name>
    <dbReference type="NCBI Taxonomy" id="269799"/>
    <lineage>
        <taxon>Bacteria</taxon>
        <taxon>Pseudomonadati</taxon>
        <taxon>Thermodesulfobacteriota</taxon>
        <taxon>Desulfuromonadia</taxon>
        <taxon>Geobacterales</taxon>
        <taxon>Geobacteraceae</taxon>
        <taxon>Geobacter</taxon>
    </lineage>
</organism>
<reference key="1">
    <citation type="journal article" date="2009" name="BMC Microbiol.">
        <title>The genome sequence of Geobacter metallireducens: features of metabolism, physiology and regulation common and dissimilar to Geobacter sulfurreducens.</title>
        <authorList>
            <person name="Aklujkar M."/>
            <person name="Krushkal J."/>
            <person name="DiBartolo G."/>
            <person name="Lapidus A."/>
            <person name="Land M.L."/>
            <person name="Lovley D.R."/>
        </authorList>
    </citation>
    <scope>NUCLEOTIDE SEQUENCE [LARGE SCALE GENOMIC DNA]</scope>
    <source>
        <strain>ATCC 53774 / DSM 7210 / GS-15</strain>
    </source>
</reference>
<dbReference type="EMBL" id="CP000148">
    <property type="protein sequence ID" value="ABB33441.1"/>
    <property type="molecule type" value="Genomic_DNA"/>
</dbReference>
<dbReference type="RefSeq" id="WP_004512667.1">
    <property type="nucleotide sequence ID" value="NC_007517.1"/>
</dbReference>
<dbReference type="SMR" id="Q39QN3"/>
<dbReference type="STRING" id="269799.Gmet_3228"/>
<dbReference type="KEGG" id="gme:Gmet_3228"/>
<dbReference type="eggNOG" id="COG0322">
    <property type="taxonomic scope" value="Bacteria"/>
</dbReference>
<dbReference type="HOGENOM" id="CLU_014841_3_2_7"/>
<dbReference type="Proteomes" id="UP000007073">
    <property type="component" value="Chromosome"/>
</dbReference>
<dbReference type="GO" id="GO:0005737">
    <property type="term" value="C:cytoplasm"/>
    <property type="evidence" value="ECO:0007669"/>
    <property type="project" value="UniProtKB-SubCell"/>
</dbReference>
<dbReference type="GO" id="GO:0009380">
    <property type="term" value="C:excinuclease repair complex"/>
    <property type="evidence" value="ECO:0007669"/>
    <property type="project" value="InterPro"/>
</dbReference>
<dbReference type="GO" id="GO:0003677">
    <property type="term" value="F:DNA binding"/>
    <property type="evidence" value="ECO:0007669"/>
    <property type="project" value="UniProtKB-UniRule"/>
</dbReference>
<dbReference type="GO" id="GO:0009381">
    <property type="term" value="F:excinuclease ABC activity"/>
    <property type="evidence" value="ECO:0007669"/>
    <property type="project" value="UniProtKB-UniRule"/>
</dbReference>
<dbReference type="GO" id="GO:0006289">
    <property type="term" value="P:nucleotide-excision repair"/>
    <property type="evidence" value="ECO:0007669"/>
    <property type="project" value="UniProtKB-UniRule"/>
</dbReference>
<dbReference type="GO" id="GO:0009432">
    <property type="term" value="P:SOS response"/>
    <property type="evidence" value="ECO:0007669"/>
    <property type="project" value="UniProtKB-UniRule"/>
</dbReference>
<dbReference type="CDD" id="cd10434">
    <property type="entry name" value="GIY-YIG_UvrC_Cho"/>
    <property type="match status" value="1"/>
</dbReference>
<dbReference type="CDD" id="cd09897">
    <property type="entry name" value="H3TH_FEN1-XPG-like"/>
    <property type="match status" value="1"/>
</dbReference>
<dbReference type="FunFam" id="3.40.1440.10:FF:000001">
    <property type="entry name" value="UvrABC system protein C"/>
    <property type="match status" value="1"/>
</dbReference>
<dbReference type="Gene3D" id="1.10.150.20">
    <property type="entry name" value="5' to 3' exonuclease, C-terminal subdomain"/>
    <property type="match status" value="1"/>
</dbReference>
<dbReference type="Gene3D" id="3.40.1440.10">
    <property type="entry name" value="GIY-YIG endonuclease"/>
    <property type="match status" value="1"/>
</dbReference>
<dbReference type="Gene3D" id="3.30.420.340">
    <property type="entry name" value="UvrC, RNAse H endonuclease domain"/>
    <property type="match status" value="1"/>
</dbReference>
<dbReference type="HAMAP" id="MF_00203">
    <property type="entry name" value="UvrC"/>
    <property type="match status" value="1"/>
</dbReference>
<dbReference type="InterPro" id="IPR000305">
    <property type="entry name" value="GIY-YIG_endonuc"/>
</dbReference>
<dbReference type="InterPro" id="IPR035901">
    <property type="entry name" value="GIY-YIG_endonuc_sf"/>
</dbReference>
<dbReference type="InterPro" id="IPR047296">
    <property type="entry name" value="GIY-YIG_UvrC_Cho"/>
</dbReference>
<dbReference type="InterPro" id="IPR010994">
    <property type="entry name" value="RuvA_2-like"/>
</dbReference>
<dbReference type="InterPro" id="IPR001943">
    <property type="entry name" value="UVR_dom"/>
</dbReference>
<dbReference type="InterPro" id="IPR036876">
    <property type="entry name" value="UVR_dom_sf"/>
</dbReference>
<dbReference type="InterPro" id="IPR050066">
    <property type="entry name" value="UvrABC_protein_C"/>
</dbReference>
<dbReference type="InterPro" id="IPR004791">
    <property type="entry name" value="UvrC"/>
</dbReference>
<dbReference type="InterPro" id="IPR001162">
    <property type="entry name" value="UvrC_RNase_H_dom"/>
</dbReference>
<dbReference type="InterPro" id="IPR038476">
    <property type="entry name" value="UvrC_RNase_H_dom_sf"/>
</dbReference>
<dbReference type="NCBIfam" id="NF001824">
    <property type="entry name" value="PRK00558.1-5"/>
    <property type="match status" value="1"/>
</dbReference>
<dbReference type="NCBIfam" id="TIGR00194">
    <property type="entry name" value="uvrC"/>
    <property type="match status" value="1"/>
</dbReference>
<dbReference type="PANTHER" id="PTHR30562:SF1">
    <property type="entry name" value="UVRABC SYSTEM PROTEIN C"/>
    <property type="match status" value="1"/>
</dbReference>
<dbReference type="PANTHER" id="PTHR30562">
    <property type="entry name" value="UVRC/OXIDOREDUCTASE"/>
    <property type="match status" value="1"/>
</dbReference>
<dbReference type="Pfam" id="PF01541">
    <property type="entry name" value="GIY-YIG"/>
    <property type="match status" value="1"/>
</dbReference>
<dbReference type="Pfam" id="PF14520">
    <property type="entry name" value="HHH_5"/>
    <property type="match status" value="1"/>
</dbReference>
<dbReference type="Pfam" id="PF02151">
    <property type="entry name" value="UVR"/>
    <property type="match status" value="1"/>
</dbReference>
<dbReference type="Pfam" id="PF22920">
    <property type="entry name" value="UvrC_RNaseH"/>
    <property type="match status" value="1"/>
</dbReference>
<dbReference type="Pfam" id="PF08459">
    <property type="entry name" value="UvrC_RNaseH_dom"/>
    <property type="match status" value="1"/>
</dbReference>
<dbReference type="SMART" id="SM00465">
    <property type="entry name" value="GIYc"/>
    <property type="match status" value="1"/>
</dbReference>
<dbReference type="SUPFAM" id="SSF46600">
    <property type="entry name" value="C-terminal UvrC-binding domain of UvrB"/>
    <property type="match status" value="1"/>
</dbReference>
<dbReference type="SUPFAM" id="SSF82771">
    <property type="entry name" value="GIY-YIG endonuclease"/>
    <property type="match status" value="1"/>
</dbReference>
<dbReference type="SUPFAM" id="SSF47781">
    <property type="entry name" value="RuvA domain 2-like"/>
    <property type="match status" value="1"/>
</dbReference>
<dbReference type="PROSITE" id="PS50164">
    <property type="entry name" value="GIY_YIG"/>
    <property type="match status" value="1"/>
</dbReference>
<dbReference type="PROSITE" id="PS50151">
    <property type="entry name" value="UVR"/>
    <property type="match status" value="1"/>
</dbReference>
<dbReference type="PROSITE" id="PS50165">
    <property type="entry name" value="UVRC"/>
    <property type="match status" value="1"/>
</dbReference>
<proteinExistence type="inferred from homology"/>
<accession>Q39QN3</accession>
<comment type="function">
    <text evidence="1">The UvrABC repair system catalyzes the recognition and processing of DNA lesions. UvrC both incises the 5' and 3' sides of the lesion. The N-terminal half is responsible for the 3' incision and the C-terminal half is responsible for the 5' incision.</text>
</comment>
<comment type="subunit">
    <text evidence="1">Interacts with UvrB in an incision complex.</text>
</comment>
<comment type="subcellular location">
    <subcellularLocation>
        <location evidence="1">Cytoplasm</location>
    </subcellularLocation>
</comment>
<comment type="similarity">
    <text evidence="1">Belongs to the UvrC family.</text>
</comment>
<protein>
    <recommendedName>
        <fullName evidence="1">UvrABC system protein C</fullName>
        <shortName evidence="1">Protein UvrC</shortName>
    </recommendedName>
    <alternativeName>
        <fullName evidence="1">Excinuclease ABC subunit C</fullName>
    </alternativeName>
</protein>
<keyword id="KW-0963">Cytoplasm</keyword>
<keyword id="KW-0227">DNA damage</keyword>
<keyword id="KW-0228">DNA excision</keyword>
<keyword id="KW-0234">DNA repair</keyword>
<keyword id="KW-0267">Excision nuclease</keyword>
<keyword id="KW-1185">Reference proteome</keyword>
<keyword id="KW-0742">SOS response</keyword>
<gene>
    <name evidence="1" type="primary">uvrC</name>
    <name type="ordered locus">Gmet_3228</name>
</gene>
<sequence length="614" mass="69719">MFDKSRLNTLPESPGVYLMKGSDGTILYVGKAKSLRKRVRSYFGAAGESRYHIRFLVARVAEVEVIVTDTEKEALILENTLIKKHRPRYNLDLRDDKTYFSLRMDMNEEFPRLTIIRKVRQDGARYFGPYSSAASAREALKQLYRLFPLRHYPLETCRRRRRPCLFYQLRQCSAPCHGLISPEEYQGLVQGAALFLDGKNRDLLKTYRERMASAAANERYEEAARYRDLIRAIEVTVEKQKMVTTGGDADVLGIHREGSSLSLALLFIRGGRLIGSRSYLLAWELEDEEAVSSFLNDYYSREVFIPDEVLVPLPVADSAALAELLSERRGKRTSVAHPQRGTKAGLVKLAGKNAEAALREKQKREEGAEAVLTELKERLHLRNLPRCIECYDISNIQGTYPVGSRVSFRDGKADKGGYRHYRIKTVAGADDFAMMHEVLSRRFRDSPAKDEHPDLIVVDGGIGQLNILTAVLRELQVEDVDAASLAKSRVERDMAAEELTRSTERVFLPGRKNPVILRQNSAPLLLLARIRDEAHRFAITYHQKLRGKDTIRSILDTIPGIGPKRRKELLRQFGSLRRIREASRDELAATPTIPPTLAESIWKSLHENDEGDTP</sequence>
<evidence type="ECO:0000255" key="1">
    <source>
        <dbReference type="HAMAP-Rule" id="MF_00203"/>
    </source>
</evidence>
<name>UVRC_GEOMG</name>
<feature type="chain" id="PRO_0000264896" description="UvrABC system protein C">
    <location>
        <begin position="1"/>
        <end position="614"/>
    </location>
</feature>
<feature type="domain" description="GIY-YIG" evidence="1">
    <location>
        <begin position="12"/>
        <end position="91"/>
    </location>
</feature>
<feature type="domain" description="UVR" evidence="1">
    <location>
        <begin position="201"/>
        <end position="236"/>
    </location>
</feature>